<protein>
    <recommendedName>
        <fullName>Structural protein ORF653</fullName>
    </recommendedName>
</protein>
<accession>Q3V4Q8</accession>
<comment type="subcellular location">
    <subcellularLocation>
        <location>Virion</location>
    </subcellularLocation>
</comment>
<reference key="1">
    <citation type="journal article" date="2005" name="Nature">
        <title>Virology: independent virus development outside a host.</title>
        <authorList>
            <person name="Haring M."/>
            <person name="Vestergaard G."/>
            <person name="Rachel R."/>
            <person name="Chen L."/>
            <person name="Garrett R.A."/>
            <person name="Prangishvili D."/>
        </authorList>
    </citation>
    <scope>NUCLEOTIDE SEQUENCE [GENOMIC DNA]</scope>
</reference>
<evidence type="ECO:0000255" key="1"/>
<evidence type="ECO:0000256" key="2">
    <source>
        <dbReference type="SAM" id="MobiDB-lite"/>
    </source>
</evidence>
<organism>
    <name type="scientific">Acidianus two-tailed virus</name>
    <name type="common">ATV</name>
    <dbReference type="NCBI Taxonomy" id="315953"/>
    <lineage>
        <taxon>Viruses</taxon>
        <taxon>Viruses incertae sedis</taxon>
        <taxon>Bicaudaviridae</taxon>
        <taxon>Bicaudavirus</taxon>
    </lineage>
</organism>
<sequence>MQPWEYVYDLLMPAGTPIGEKQFTKYIYLTLAVPATKEFEEKISKGDTKDLELPVYPVAFNTKPAEFKGDRIATKKDLLTRSGLYDDDYDFEAPIKDLEFKSALVPGYFPLAVLKLYFEGDIDAHPEDYGLKPIDGHKWYSSVNGSYKVTNGLLFNVDETKNSDHYSVLFLDENPKEFNTLNGYGVVRFYMDLKNAPPEVYTKAKEECISAGGLYYYDAREETAYCRLPLNKEANIKASEFIHQLYEMIKSKITSEDFLKNEMVYQLPGPKVIPVKPVIGKTFEEMVKTADKYLLLGETAKEETKQETKQETGKEEEEKKETKQESQEQLFNPFAIVDEMLAEGQPAEAKQENSPQQQNPPAEAKQRQQQEENNAEAPQQRQQEENTPLKMNILTEEESNKSEEGQQPLENNIQTFGFKGDIADFFASLVKDKYIFLPILSRRSPSEYKNAKKQRTFKGEAVEEHTEIPRENMKYAEFRKKYSEIVNKYAVPFMHDGIWAILPGKEQELYKELDKLVQEAQKLGISPEEIEFMVTVLLVPKDAVVREINRQIKEIRTDIDEVKQELQNPDLKKTKIASLKKQLEQKQLRLNLLKDLYSTVTKEEIDKLAGKVKDTLYTLNQIAKYAGQQEETDETTEEEEEEEEEGNDTVKLS</sequence>
<organismHost>
    <name type="scientific">Acidianus convivator</name>
    <dbReference type="NCBI Taxonomy" id="269667"/>
</organismHost>
<proteinExistence type="predicted"/>
<name>Y653_ATV</name>
<feature type="chain" id="PRO_0000389060" description="Structural protein ORF653">
    <location>
        <begin position="1"/>
        <end position="653"/>
    </location>
</feature>
<feature type="region of interest" description="Disordered" evidence="2">
    <location>
        <begin position="302"/>
        <end position="329"/>
    </location>
</feature>
<feature type="region of interest" description="Disordered" evidence="2">
    <location>
        <begin position="344"/>
        <end position="388"/>
    </location>
</feature>
<feature type="region of interest" description="Disordered" evidence="2">
    <location>
        <begin position="626"/>
        <end position="653"/>
    </location>
</feature>
<feature type="coiled-coil region" evidence="1">
    <location>
        <begin position="300"/>
        <end position="330"/>
    </location>
</feature>
<feature type="coiled-coil region" evidence="1">
    <location>
        <begin position="505"/>
        <end position="649"/>
    </location>
</feature>
<feature type="compositionally biased region" description="Basic and acidic residues" evidence="2">
    <location>
        <begin position="302"/>
        <end position="326"/>
    </location>
</feature>
<feature type="compositionally biased region" description="Low complexity" evidence="2">
    <location>
        <begin position="371"/>
        <end position="381"/>
    </location>
</feature>
<feature type="compositionally biased region" description="Acidic residues" evidence="2">
    <location>
        <begin position="630"/>
        <end position="647"/>
    </location>
</feature>
<keyword id="KW-0175">Coiled coil</keyword>
<keyword id="KW-1185">Reference proteome</keyword>
<keyword id="KW-0946">Virion</keyword>
<dbReference type="EMBL" id="AJ888457">
    <property type="protein sequence ID" value="CAI59906.1"/>
    <property type="molecule type" value="Genomic_DNA"/>
</dbReference>
<dbReference type="RefSeq" id="YP_319888.1">
    <property type="nucleotide sequence ID" value="NC_007409.1"/>
</dbReference>
<dbReference type="SMR" id="Q3V4Q8"/>
<dbReference type="GeneID" id="4484262"/>
<dbReference type="KEGG" id="vg:4484262"/>
<dbReference type="Proteomes" id="UP000002150">
    <property type="component" value="Genome"/>
</dbReference>
<dbReference type="GO" id="GO:0044423">
    <property type="term" value="C:virion component"/>
    <property type="evidence" value="ECO:0007669"/>
    <property type="project" value="UniProtKB-KW"/>
</dbReference>